<evidence type="ECO:0000255" key="1">
    <source>
        <dbReference type="HAMAP-Rule" id="MF_01576"/>
    </source>
</evidence>
<accession>A3D303</accession>
<proteinExistence type="inferred from homology"/>
<sequence>MTAQIIDGKAIAQSIRTKLSEKVTARKEAGQRIPGLAVVLVGADPASQVYVGSKRKACEEVGFISRSYDLETSCSEDELLSLIDSLNDDPTIDGILVQLPLPAHIEDSKVIERIRPDKDVDGFHPYNVGRLAQRIPVLRSCTPMGIMTLIKSTGVDTYGLDAVVVGASNIVGRPMTLELLLAGCTTTTCHRFTKNLEQKIRIADLVVVAVGKPGFIPGEWIKPGAIVIDVGINRLDNGTLVGDVQYDVAAQNASFITPVPGGVGPMTIASLLENTLYAAEQYHD</sequence>
<dbReference type="EC" id="1.5.1.5" evidence="1"/>
<dbReference type="EC" id="3.5.4.9" evidence="1"/>
<dbReference type="EMBL" id="CP000563">
    <property type="protein sequence ID" value="ABN61116.1"/>
    <property type="molecule type" value="Genomic_DNA"/>
</dbReference>
<dbReference type="RefSeq" id="WP_011846463.1">
    <property type="nucleotide sequence ID" value="NC_009052.1"/>
</dbReference>
<dbReference type="SMR" id="A3D303"/>
<dbReference type="STRING" id="325240.Sbal_1602"/>
<dbReference type="KEGG" id="sbl:Sbal_1602"/>
<dbReference type="HOGENOM" id="CLU_034045_2_1_6"/>
<dbReference type="OrthoDB" id="9803580at2"/>
<dbReference type="UniPathway" id="UPA00193"/>
<dbReference type="Proteomes" id="UP000001557">
    <property type="component" value="Chromosome"/>
</dbReference>
<dbReference type="GO" id="GO:0005829">
    <property type="term" value="C:cytosol"/>
    <property type="evidence" value="ECO:0007669"/>
    <property type="project" value="TreeGrafter"/>
</dbReference>
<dbReference type="GO" id="GO:0004477">
    <property type="term" value="F:methenyltetrahydrofolate cyclohydrolase activity"/>
    <property type="evidence" value="ECO:0007669"/>
    <property type="project" value="UniProtKB-UniRule"/>
</dbReference>
<dbReference type="GO" id="GO:0004488">
    <property type="term" value="F:methylenetetrahydrofolate dehydrogenase (NADP+) activity"/>
    <property type="evidence" value="ECO:0007669"/>
    <property type="project" value="UniProtKB-UniRule"/>
</dbReference>
<dbReference type="GO" id="GO:0000105">
    <property type="term" value="P:L-histidine biosynthetic process"/>
    <property type="evidence" value="ECO:0007669"/>
    <property type="project" value="UniProtKB-KW"/>
</dbReference>
<dbReference type="GO" id="GO:0009086">
    <property type="term" value="P:methionine biosynthetic process"/>
    <property type="evidence" value="ECO:0007669"/>
    <property type="project" value="UniProtKB-KW"/>
</dbReference>
<dbReference type="GO" id="GO:0006164">
    <property type="term" value="P:purine nucleotide biosynthetic process"/>
    <property type="evidence" value="ECO:0007669"/>
    <property type="project" value="UniProtKB-KW"/>
</dbReference>
<dbReference type="GO" id="GO:0035999">
    <property type="term" value="P:tetrahydrofolate interconversion"/>
    <property type="evidence" value="ECO:0007669"/>
    <property type="project" value="UniProtKB-UniRule"/>
</dbReference>
<dbReference type="CDD" id="cd01080">
    <property type="entry name" value="NAD_bind_m-THF_DH_Cyclohyd"/>
    <property type="match status" value="1"/>
</dbReference>
<dbReference type="FunFam" id="3.40.50.10860:FF:000001">
    <property type="entry name" value="Bifunctional protein FolD"/>
    <property type="match status" value="1"/>
</dbReference>
<dbReference type="FunFam" id="3.40.50.720:FF:000006">
    <property type="entry name" value="Bifunctional protein FolD"/>
    <property type="match status" value="1"/>
</dbReference>
<dbReference type="Gene3D" id="3.40.50.10860">
    <property type="entry name" value="Leucine Dehydrogenase, chain A, domain 1"/>
    <property type="match status" value="1"/>
</dbReference>
<dbReference type="Gene3D" id="3.40.50.720">
    <property type="entry name" value="NAD(P)-binding Rossmann-like Domain"/>
    <property type="match status" value="1"/>
</dbReference>
<dbReference type="HAMAP" id="MF_01576">
    <property type="entry name" value="THF_DHG_CYH"/>
    <property type="match status" value="1"/>
</dbReference>
<dbReference type="InterPro" id="IPR046346">
    <property type="entry name" value="Aminoacid_DH-like_N_sf"/>
</dbReference>
<dbReference type="InterPro" id="IPR036291">
    <property type="entry name" value="NAD(P)-bd_dom_sf"/>
</dbReference>
<dbReference type="InterPro" id="IPR000672">
    <property type="entry name" value="THF_DH/CycHdrlase"/>
</dbReference>
<dbReference type="InterPro" id="IPR020630">
    <property type="entry name" value="THF_DH/CycHdrlase_cat_dom"/>
</dbReference>
<dbReference type="InterPro" id="IPR020867">
    <property type="entry name" value="THF_DH/CycHdrlase_CS"/>
</dbReference>
<dbReference type="InterPro" id="IPR020631">
    <property type="entry name" value="THF_DH/CycHdrlase_NAD-bd_dom"/>
</dbReference>
<dbReference type="NCBIfam" id="NF008058">
    <property type="entry name" value="PRK10792.1"/>
    <property type="match status" value="1"/>
</dbReference>
<dbReference type="PANTHER" id="PTHR48099:SF5">
    <property type="entry name" value="C-1-TETRAHYDROFOLATE SYNTHASE, CYTOPLASMIC"/>
    <property type="match status" value="1"/>
</dbReference>
<dbReference type="PANTHER" id="PTHR48099">
    <property type="entry name" value="C-1-TETRAHYDROFOLATE SYNTHASE, CYTOPLASMIC-RELATED"/>
    <property type="match status" value="1"/>
</dbReference>
<dbReference type="Pfam" id="PF00763">
    <property type="entry name" value="THF_DHG_CYH"/>
    <property type="match status" value="1"/>
</dbReference>
<dbReference type="Pfam" id="PF02882">
    <property type="entry name" value="THF_DHG_CYH_C"/>
    <property type="match status" value="1"/>
</dbReference>
<dbReference type="PRINTS" id="PR00085">
    <property type="entry name" value="THFDHDRGNASE"/>
</dbReference>
<dbReference type="SUPFAM" id="SSF53223">
    <property type="entry name" value="Aminoacid dehydrogenase-like, N-terminal domain"/>
    <property type="match status" value="1"/>
</dbReference>
<dbReference type="SUPFAM" id="SSF51735">
    <property type="entry name" value="NAD(P)-binding Rossmann-fold domains"/>
    <property type="match status" value="1"/>
</dbReference>
<dbReference type="PROSITE" id="PS00766">
    <property type="entry name" value="THF_DHG_CYH_1"/>
    <property type="match status" value="1"/>
</dbReference>
<dbReference type="PROSITE" id="PS00767">
    <property type="entry name" value="THF_DHG_CYH_2"/>
    <property type="match status" value="1"/>
</dbReference>
<organism>
    <name type="scientific">Shewanella baltica (strain OS155 / ATCC BAA-1091)</name>
    <dbReference type="NCBI Taxonomy" id="325240"/>
    <lineage>
        <taxon>Bacteria</taxon>
        <taxon>Pseudomonadati</taxon>
        <taxon>Pseudomonadota</taxon>
        <taxon>Gammaproteobacteria</taxon>
        <taxon>Alteromonadales</taxon>
        <taxon>Shewanellaceae</taxon>
        <taxon>Shewanella</taxon>
    </lineage>
</organism>
<reference key="1">
    <citation type="submission" date="2007-02" db="EMBL/GenBank/DDBJ databases">
        <title>Complete sequence of chromosome of Shewanella baltica OS155.</title>
        <authorList>
            <consortium name="US DOE Joint Genome Institute"/>
            <person name="Copeland A."/>
            <person name="Lucas S."/>
            <person name="Lapidus A."/>
            <person name="Barry K."/>
            <person name="Detter J.C."/>
            <person name="Glavina del Rio T."/>
            <person name="Hammon N."/>
            <person name="Israni S."/>
            <person name="Dalin E."/>
            <person name="Tice H."/>
            <person name="Pitluck S."/>
            <person name="Sims D.R."/>
            <person name="Brettin T."/>
            <person name="Bruce D."/>
            <person name="Han C."/>
            <person name="Tapia R."/>
            <person name="Brainard J."/>
            <person name="Schmutz J."/>
            <person name="Larimer F."/>
            <person name="Land M."/>
            <person name="Hauser L."/>
            <person name="Kyrpides N."/>
            <person name="Mikhailova N."/>
            <person name="Brettar I."/>
            <person name="Klappenbach J."/>
            <person name="Konstantinidis K."/>
            <person name="Rodrigues J."/>
            <person name="Tiedje J."/>
            <person name="Richardson P."/>
        </authorList>
    </citation>
    <scope>NUCLEOTIDE SEQUENCE [LARGE SCALE GENOMIC DNA]</scope>
    <source>
        <strain>OS155 / ATCC BAA-1091</strain>
    </source>
</reference>
<keyword id="KW-0028">Amino-acid biosynthesis</keyword>
<keyword id="KW-0368">Histidine biosynthesis</keyword>
<keyword id="KW-0378">Hydrolase</keyword>
<keyword id="KW-0486">Methionine biosynthesis</keyword>
<keyword id="KW-0511">Multifunctional enzyme</keyword>
<keyword id="KW-0521">NADP</keyword>
<keyword id="KW-0554">One-carbon metabolism</keyword>
<keyword id="KW-0560">Oxidoreductase</keyword>
<keyword id="KW-0658">Purine biosynthesis</keyword>
<keyword id="KW-1185">Reference proteome</keyword>
<gene>
    <name evidence="1" type="primary">folD</name>
    <name type="ordered locus">Sbal_1602</name>
</gene>
<comment type="function">
    <text evidence="1">Catalyzes the oxidation of 5,10-methylenetetrahydrofolate to 5,10-methenyltetrahydrofolate and then the hydrolysis of 5,10-methenyltetrahydrofolate to 10-formyltetrahydrofolate.</text>
</comment>
<comment type="catalytic activity">
    <reaction evidence="1">
        <text>(6R)-5,10-methylene-5,6,7,8-tetrahydrofolate + NADP(+) = (6R)-5,10-methenyltetrahydrofolate + NADPH</text>
        <dbReference type="Rhea" id="RHEA:22812"/>
        <dbReference type="ChEBI" id="CHEBI:15636"/>
        <dbReference type="ChEBI" id="CHEBI:57455"/>
        <dbReference type="ChEBI" id="CHEBI:57783"/>
        <dbReference type="ChEBI" id="CHEBI:58349"/>
        <dbReference type="EC" id="1.5.1.5"/>
    </reaction>
</comment>
<comment type="catalytic activity">
    <reaction evidence="1">
        <text>(6R)-5,10-methenyltetrahydrofolate + H2O = (6R)-10-formyltetrahydrofolate + H(+)</text>
        <dbReference type="Rhea" id="RHEA:23700"/>
        <dbReference type="ChEBI" id="CHEBI:15377"/>
        <dbReference type="ChEBI" id="CHEBI:15378"/>
        <dbReference type="ChEBI" id="CHEBI:57455"/>
        <dbReference type="ChEBI" id="CHEBI:195366"/>
        <dbReference type="EC" id="3.5.4.9"/>
    </reaction>
</comment>
<comment type="pathway">
    <text evidence="1">One-carbon metabolism; tetrahydrofolate interconversion.</text>
</comment>
<comment type="subunit">
    <text evidence="1">Homodimer.</text>
</comment>
<comment type="similarity">
    <text evidence="1">Belongs to the tetrahydrofolate dehydrogenase/cyclohydrolase family.</text>
</comment>
<name>FOLD_SHEB5</name>
<feature type="chain" id="PRO_1000069257" description="Bifunctional protein FolD">
    <location>
        <begin position="1"/>
        <end position="284"/>
    </location>
</feature>
<feature type="binding site" evidence="1">
    <location>
        <begin position="166"/>
        <end position="168"/>
    </location>
    <ligand>
        <name>NADP(+)</name>
        <dbReference type="ChEBI" id="CHEBI:58349"/>
    </ligand>
</feature>
<feature type="binding site" evidence="1">
    <location>
        <position position="232"/>
    </location>
    <ligand>
        <name>NADP(+)</name>
        <dbReference type="ChEBI" id="CHEBI:58349"/>
    </ligand>
</feature>
<protein>
    <recommendedName>
        <fullName evidence="1">Bifunctional protein FolD</fullName>
    </recommendedName>
    <domain>
        <recommendedName>
            <fullName evidence="1">Methylenetetrahydrofolate dehydrogenase</fullName>
            <ecNumber evidence="1">1.5.1.5</ecNumber>
        </recommendedName>
    </domain>
    <domain>
        <recommendedName>
            <fullName evidence="1">Methenyltetrahydrofolate cyclohydrolase</fullName>
            <ecNumber evidence="1">3.5.4.9</ecNumber>
        </recommendedName>
    </domain>
</protein>